<proteinExistence type="evidence at protein level"/>
<feature type="chain" id="PRO_0000080746" description="H-2 class II histocompatibility antigen, A-Q alpha chain">
    <location>
        <begin position="1" status="less than"/>
        <end position="221"/>
    </location>
</feature>
<feature type="topological domain" description="Extracellular" evidence="1">
    <location>
        <begin position="1" status="less than"/>
        <end position="183"/>
    </location>
</feature>
<feature type="transmembrane region" description="Helical" evidence="1">
    <location>
        <begin position="184"/>
        <end position="209"/>
    </location>
</feature>
<feature type="topological domain" description="Cytoplasmic" evidence="1">
    <location>
        <begin position="210"/>
        <end position="221"/>
    </location>
</feature>
<feature type="domain" description="Ig-like C1-type">
    <location>
        <begin position="79"/>
        <end position="171"/>
    </location>
</feature>
<feature type="region of interest" description="Alpha-1">
    <location>
        <begin position="1" status="less than"/>
        <end position="76"/>
    </location>
</feature>
<feature type="region of interest" description="Alpha-2">
    <location>
        <begin position="77"/>
        <end position="170"/>
    </location>
</feature>
<feature type="region of interest" description="Connecting peptide">
    <location>
        <begin position="171"/>
        <end position="183"/>
    </location>
</feature>
<feature type="glycosylation site" description="N-linked (GlcNAc...) asparagine" evidence="1">
    <location>
        <position position="110"/>
    </location>
</feature>
<feature type="disulfide bond" evidence="2">
    <location>
        <begin position="99"/>
        <end position="155"/>
    </location>
</feature>
<feature type="non-terminal residue">
    <location>
        <position position="1"/>
    </location>
</feature>
<name>HA2Q_MOUSE</name>
<keyword id="KW-1064">Adaptive immunity</keyword>
<keyword id="KW-1015">Disulfide bond</keyword>
<keyword id="KW-0325">Glycoprotein</keyword>
<keyword id="KW-0391">Immunity</keyword>
<keyword id="KW-0472">Membrane</keyword>
<keyword id="KW-0491">MHC II</keyword>
<keyword id="KW-1185">Reference proteome</keyword>
<keyword id="KW-0812">Transmembrane</keyword>
<keyword id="KW-1133">Transmembrane helix</keyword>
<gene>
    <name type="primary">H2-Aa</name>
</gene>
<sequence>GIVVYQSPGDIGQYTHEFDGDEWFYVDLDKKETVWMLPEFGQLTSFDPQGGLQNIATGKHNLGGWTKRSNFTPATNEAPQATVFPKSPVLLGQPNTLICFVDNIFPPVINITWLRNSKSVTDGVYETSFLVNRDHSFHKLSYLTFIPSDDDIYDCKVEHWGLDEPVLKHWEPEIPAPMSELTETVVCALGLSVGLVGIVVGTIFIIQGLRSGGTSRPPGPL</sequence>
<reference key="1">
    <citation type="journal article" date="1983" name="Cell">
        <title>Regions of allelic hypervariability in the murine A alpha immune response gene.</title>
        <authorList>
            <person name="Benoist C.O."/>
            <person name="Mathis D.J."/>
            <person name="Kanter M.R."/>
            <person name="Williams V.E."/>
            <person name="McDevitt H.O."/>
        </authorList>
    </citation>
    <scope>NUCLEOTIDE SEQUENCE [MRNA]</scope>
</reference>
<reference key="2">
    <citation type="journal article" date="2010" name="Cell">
        <title>A tissue-specific atlas of mouse protein phosphorylation and expression.</title>
        <authorList>
            <person name="Huttlin E.L."/>
            <person name="Jedrychowski M.P."/>
            <person name="Elias J.E."/>
            <person name="Goswami T."/>
            <person name="Rad R."/>
            <person name="Beausoleil S.A."/>
            <person name="Villen J."/>
            <person name="Haas W."/>
            <person name="Sowa M.E."/>
            <person name="Gygi S.P."/>
        </authorList>
    </citation>
    <scope>IDENTIFICATION BY MASS SPECTROMETRY [LARGE SCALE ANALYSIS]</scope>
    <source>
        <tissue>Heart</tissue>
        <tissue>Kidney</tissue>
        <tissue>Lung</tissue>
        <tissue>Spleen</tissue>
    </source>
</reference>
<comment type="subcellular location">
    <subcellularLocation>
        <location evidence="3">Membrane</location>
        <topology evidence="3">Single-pass type I membrane protein</topology>
    </subcellularLocation>
</comment>
<comment type="similarity">
    <text evidence="3">Belongs to the MHC class II family.</text>
</comment>
<organism>
    <name type="scientific">Mus musculus</name>
    <name type="common">Mouse</name>
    <dbReference type="NCBI Taxonomy" id="10090"/>
    <lineage>
        <taxon>Eukaryota</taxon>
        <taxon>Metazoa</taxon>
        <taxon>Chordata</taxon>
        <taxon>Craniata</taxon>
        <taxon>Vertebrata</taxon>
        <taxon>Euteleostomi</taxon>
        <taxon>Mammalia</taxon>
        <taxon>Eutheria</taxon>
        <taxon>Euarchontoglires</taxon>
        <taxon>Glires</taxon>
        <taxon>Rodentia</taxon>
        <taxon>Myomorpha</taxon>
        <taxon>Muroidea</taxon>
        <taxon>Muridae</taxon>
        <taxon>Murinae</taxon>
        <taxon>Mus</taxon>
        <taxon>Mus</taxon>
    </lineage>
</organism>
<accession>P04227</accession>
<evidence type="ECO:0000255" key="1"/>
<evidence type="ECO:0000255" key="2">
    <source>
        <dbReference type="PROSITE-ProRule" id="PRU00114"/>
    </source>
</evidence>
<evidence type="ECO:0000305" key="3"/>
<protein>
    <recommendedName>
        <fullName>H-2 class II histocompatibility antigen, A-Q alpha chain</fullName>
    </recommendedName>
</protein>
<dbReference type="EMBL" id="K01925">
    <property type="protein sequence ID" value="AAA39620.1"/>
    <property type="molecule type" value="mRNA"/>
</dbReference>
<dbReference type="PIR" id="A02218">
    <property type="entry name" value="HLMSA1"/>
</dbReference>
<dbReference type="SMR" id="P04227"/>
<dbReference type="GlyCosmos" id="P04227">
    <property type="glycosylation" value="1 site, No reported glycans"/>
</dbReference>
<dbReference type="jPOST" id="P04227"/>
<dbReference type="ProteomicsDB" id="270927"/>
<dbReference type="AGR" id="MGI:95895"/>
<dbReference type="MGI" id="MGI:95895">
    <property type="gene designation" value="H2-Aa"/>
</dbReference>
<dbReference type="OrthoDB" id="8925804at2759"/>
<dbReference type="ChiTaRS" id="H2-Aa">
    <property type="organism name" value="mouse"/>
</dbReference>
<dbReference type="Proteomes" id="UP000000589">
    <property type="component" value="Unplaced"/>
</dbReference>
<dbReference type="GO" id="GO:0009897">
    <property type="term" value="C:external side of plasma membrane"/>
    <property type="evidence" value="ECO:0000314"/>
    <property type="project" value="MGI"/>
</dbReference>
<dbReference type="GO" id="GO:0005764">
    <property type="term" value="C:lysosome"/>
    <property type="evidence" value="ECO:0000314"/>
    <property type="project" value="MGI"/>
</dbReference>
<dbReference type="GO" id="GO:0042613">
    <property type="term" value="C:MHC class II protein complex"/>
    <property type="evidence" value="ECO:0000314"/>
    <property type="project" value="MGI"/>
</dbReference>
<dbReference type="GO" id="GO:0005886">
    <property type="term" value="C:plasma membrane"/>
    <property type="evidence" value="ECO:0000314"/>
    <property type="project" value="MGI"/>
</dbReference>
<dbReference type="GO" id="GO:0042605">
    <property type="term" value="F:peptide antigen binding"/>
    <property type="evidence" value="ECO:0000314"/>
    <property type="project" value="MGI"/>
</dbReference>
<dbReference type="GO" id="GO:0002250">
    <property type="term" value="P:adaptive immune response"/>
    <property type="evidence" value="ECO:0007669"/>
    <property type="project" value="UniProtKB-KW"/>
</dbReference>
<dbReference type="GO" id="GO:0019882">
    <property type="term" value="P:antigen processing and presentation"/>
    <property type="evidence" value="ECO:0000314"/>
    <property type="project" value="MGI"/>
</dbReference>
<dbReference type="GO" id="GO:0019886">
    <property type="term" value="P:antigen processing and presentation of exogenous peptide antigen via MHC class II"/>
    <property type="evidence" value="ECO:0000314"/>
    <property type="project" value="MGI"/>
</dbReference>
<dbReference type="GO" id="GO:0048002">
    <property type="term" value="P:antigen processing and presentation of peptide antigen"/>
    <property type="evidence" value="ECO:0000314"/>
    <property type="project" value="MGI"/>
</dbReference>
<dbReference type="GO" id="GO:0045582">
    <property type="term" value="P:positive regulation of T cell differentiation"/>
    <property type="evidence" value="ECO:0000314"/>
    <property type="project" value="MGI"/>
</dbReference>
<dbReference type="CDD" id="cd21006">
    <property type="entry name" value="IgC1_MHC_II_alpha_I-A"/>
    <property type="match status" value="1"/>
</dbReference>
<dbReference type="FunFam" id="2.60.40.10:FF:000280">
    <property type="entry name" value="HLA class II histocompatibility antigen, DR alpha chain"/>
    <property type="match status" value="1"/>
</dbReference>
<dbReference type="Gene3D" id="3.10.320.10">
    <property type="entry name" value="Class II Histocompatibility Antigen, M Beta Chain, Chain B, domain 1"/>
    <property type="match status" value="1"/>
</dbReference>
<dbReference type="Gene3D" id="2.60.40.10">
    <property type="entry name" value="Immunoglobulins"/>
    <property type="match status" value="1"/>
</dbReference>
<dbReference type="InterPro" id="IPR007110">
    <property type="entry name" value="Ig-like_dom"/>
</dbReference>
<dbReference type="InterPro" id="IPR036179">
    <property type="entry name" value="Ig-like_dom_sf"/>
</dbReference>
<dbReference type="InterPro" id="IPR013783">
    <property type="entry name" value="Ig-like_fold"/>
</dbReference>
<dbReference type="InterPro" id="IPR003006">
    <property type="entry name" value="Ig/MHC_CS"/>
</dbReference>
<dbReference type="InterPro" id="IPR003597">
    <property type="entry name" value="Ig_C1-set"/>
</dbReference>
<dbReference type="InterPro" id="IPR050160">
    <property type="entry name" value="MHC/Immunoglobulin"/>
</dbReference>
<dbReference type="InterPro" id="IPR011162">
    <property type="entry name" value="MHC_I/II-like_Ag-recog"/>
</dbReference>
<dbReference type="InterPro" id="IPR014745">
    <property type="entry name" value="MHC_II_a/b_N"/>
</dbReference>
<dbReference type="InterPro" id="IPR001003">
    <property type="entry name" value="MHC_II_a_N"/>
</dbReference>
<dbReference type="PANTHER" id="PTHR19944:SF59">
    <property type="entry name" value="HLA CLASS II HISTOCOMPATIBILITY ANTIGEN, DQ ALPHA 1 CHAIN"/>
    <property type="match status" value="1"/>
</dbReference>
<dbReference type="PANTHER" id="PTHR19944">
    <property type="entry name" value="MHC CLASS II-RELATED"/>
    <property type="match status" value="1"/>
</dbReference>
<dbReference type="Pfam" id="PF07654">
    <property type="entry name" value="C1-set"/>
    <property type="match status" value="1"/>
</dbReference>
<dbReference type="Pfam" id="PF00993">
    <property type="entry name" value="MHC_II_alpha"/>
    <property type="match status" value="1"/>
</dbReference>
<dbReference type="SMART" id="SM00407">
    <property type="entry name" value="IGc1"/>
    <property type="match status" value="1"/>
</dbReference>
<dbReference type="SMART" id="SM00920">
    <property type="entry name" value="MHC_II_alpha"/>
    <property type="match status" value="1"/>
</dbReference>
<dbReference type="SUPFAM" id="SSF48726">
    <property type="entry name" value="Immunoglobulin"/>
    <property type="match status" value="1"/>
</dbReference>
<dbReference type="SUPFAM" id="SSF54452">
    <property type="entry name" value="MHC antigen-recognition domain"/>
    <property type="match status" value="1"/>
</dbReference>
<dbReference type="PROSITE" id="PS50835">
    <property type="entry name" value="IG_LIKE"/>
    <property type="match status" value="1"/>
</dbReference>
<dbReference type="PROSITE" id="PS00290">
    <property type="entry name" value="IG_MHC"/>
    <property type="match status" value="1"/>
</dbReference>